<protein>
    <recommendedName>
        <fullName>Long neurotoxin homolog TA-bm16</fullName>
    </recommendedName>
    <alternativeName>
        <fullName>Delta-protein</fullName>
    </alternativeName>
</protein>
<keyword id="KW-1217">Cell adhesion impairing toxin</keyword>
<keyword id="KW-1015">Disulfide bond</keyword>
<keyword id="KW-1214">G-protein coupled acetylcholine receptor impairing toxin</keyword>
<keyword id="KW-1213">G-protein coupled receptor impairing toxin</keyword>
<keyword id="KW-1199">Hemostasis impairing toxin</keyword>
<keyword id="KW-0528">Neurotoxin</keyword>
<keyword id="KW-1201">Platelet aggregation inhibiting toxin</keyword>
<keyword id="KW-0964">Secreted</keyword>
<keyword id="KW-0732">Signal</keyword>
<keyword id="KW-0800">Toxin</keyword>
<feature type="signal peptide" evidence="1">
    <location>
        <begin position="1"/>
        <end position="21"/>
    </location>
</feature>
<feature type="chain" id="PRO_0000035429" description="Long neurotoxin homolog TA-bm16">
    <location>
        <begin position="22"/>
        <end position="89"/>
    </location>
</feature>
<feature type="disulfide bond" evidence="2">
    <location>
        <begin position="24"/>
        <end position="45"/>
    </location>
</feature>
<feature type="disulfide bond" evidence="2">
    <location>
        <begin position="27"/>
        <end position="32"/>
    </location>
</feature>
<feature type="disulfide bond" evidence="2">
    <location>
        <begin position="38"/>
        <end position="66"/>
    </location>
</feature>
<feature type="disulfide bond" evidence="2">
    <location>
        <begin position="70"/>
        <end position="81"/>
    </location>
</feature>
<feature type="disulfide bond" evidence="2">
    <location>
        <begin position="82"/>
        <end position="87"/>
    </location>
</feature>
<organism>
    <name type="scientific">Bungarus multicinctus</name>
    <name type="common">Many-banded krait</name>
    <dbReference type="NCBI Taxonomy" id="8616"/>
    <lineage>
        <taxon>Eukaryota</taxon>
        <taxon>Metazoa</taxon>
        <taxon>Chordata</taxon>
        <taxon>Craniata</taxon>
        <taxon>Vertebrata</taxon>
        <taxon>Euteleostomi</taxon>
        <taxon>Lepidosauria</taxon>
        <taxon>Squamata</taxon>
        <taxon>Bifurcata</taxon>
        <taxon>Unidentata</taxon>
        <taxon>Episquamata</taxon>
        <taxon>Toxicofera</taxon>
        <taxon>Serpentes</taxon>
        <taxon>Colubroidea</taxon>
        <taxon>Elapidae</taxon>
        <taxon>Bungarinae</taxon>
        <taxon>Bungarus</taxon>
    </lineage>
</organism>
<accession>O12963</accession>
<name>3NO56_BUNMU</name>
<evidence type="ECO:0000250" key="1"/>
<evidence type="ECO:0000250" key="2">
    <source>
        <dbReference type="UniProtKB" id="P81782"/>
    </source>
</evidence>
<evidence type="ECO:0000250" key="3">
    <source>
        <dbReference type="UniProtKB" id="Q9YGJ0"/>
    </source>
</evidence>
<evidence type="ECO:0000305" key="4"/>
<sequence>MKTLLLTLVVVTIVCLDLGYTMQCKTCSFYTCPNSETCPDGKNICVKRSWTAVAGDGLKREIRRECAATCPPSKLGLTVFCCTTDNCNH</sequence>
<reference key="1">
    <citation type="journal article" date="1997" name="Biochem. Mol. Biol. Int.">
        <title>cDNA sequence analysis of a neurotoxin homology from Taiwan banded krait.</title>
        <authorList>
            <person name="Chang L.-S."/>
            <person name="Lin J."/>
        </authorList>
    </citation>
    <scope>NUCLEOTIDE SEQUENCE [MRNA]</scope>
    <source>
        <tissue>Venom gland</tissue>
    </source>
</reference>
<dbReference type="EMBL" id="Y12267">
    <property type="protein sequence ID" value="CAA72941.1"/>
    <property type="molecule type" value="mRNA"/>
</dbReference>
<dbReference type="SMR" id="O12963"/>
<dbReference type="GO" id="GO:0005576">
    <property type="term" value="C:extracellular region"/>
    <property type="evidence" value="ECO:0007669"/>
    <property type="project" value="UniProtKB-SubCell"/>
</dbReference>
<dbReference type="GO" id="GO:0090729">
    <property type="term" value="F:toxin activity"/>
    <property type="evidence" value="ECO:0007669"/>
    <property type="project" value="UniProtKB-KW"/>
</dbReference>
<dbReference type="CDD" id="cd00206">
    <property type="entry name" value="TFP_snake_toxin"/>
    <property type="match status" value="1"/>
</dbReference>
<dbReference type="FunFam" id="2.10.60.10:FF:000024">
    <property type="entry name" value="Cytotoxin 1"/>
    <property type="match status" value="1"/>
</dbReference>
<dbReference type="Gene3D" id="2.10.60.10">
    <property type="entry name" value="CD59"/>
    <property type="match status" value="1"/>
</dbReference>
<dbReference type="InterPro" id="IPR003571">
    <property type="entry name" value="Snake_3FTx"/>
</dbReference>
<dbReference type="InterPro" id="IPR045860">
    <property type="entry name" value="Snake_toxin-like_sf"/>
</dbReference>
<dbReference type="InterPro" id="IPR054131">
    <property type="entry name" value="Toxin_cobra-type"/>
</dbReference>
<dbReference type="Pfam" id="PF21947">
    <property type="entry name" value="Toxin_cobra-type"/>
    <property type="match status" value="1"/>
</dbReference>
<dbReference type="SUPFAM" id="SSF57302">
    <property type="entry name" value="Snake toxin-like"/>
    <property type="match status" value="1"/>
</dbReference>
<proteinExistence type="inferred from homology"/>
<comment type="function">
    <text evidence="3">Exhibits M2 muscarinic acetylcholine receptor (CHRM2)-blocking activity, but has a weak binding activity toward nicotinic AChR. Moreover, it inhibits collagen-induced platelet aggregation.</text>
</comment>
<comment type="subcellular location">
    <subcellularLocation>
        <location evidence="1">Secreted</location>
    </subcellularLocation>
</comment>
<comment type="tissue specificity">
    <text evidence="4">Expressed by the venom gland.</text>
</comment>
<comment type="similarity">
    <text evidence="4">Belongs to the three-finger toxin family. Ancestral subfamily. Orphan group V sub-subfamily.</text>
</comment>